<dbReference type="EMBL" id="CP000439">
    <property type="protein sequence ID" value="ABK89139.1"/>
    <property type="molecule type" value="Genomic_DNA"/>
</dbReference>
<dbReference type="RefSeq" id="WP_003014302.1">
    <property type="nucleotide sequence ID" value="NZ_CP009633.1"/>
</dbReference>
<dbReference type="SMR" id="A0Q4H4"/>
<dbReference type="GeneID" id="75264270"/>
<dbReference type="KEGG" id="ftn:FTN_0230"/>
<dbReference type="KEGG" id="ftx:AW25_1812"/>
<dbReference type="BioCyc" id="FTUL401614:G1G75-241-MONOMER"/>
<dbReference type="Proteomes" id="UP000000762">
    <property type="component" value="Chromosome"/>
</dbReference>
<dbReference type="GO" id="GO:0005829">
    <property type="term" value="C:cytosol"/>
    <property type="evidence" value="ECO:0007669"/>
    <property type="project" value="GOC"/>
</dbReference>
<dbReference type="GO" id="GO:0043023">
    <property type="term" value="F:ribosomal large subunit binding"/>
    <property type="evidence" value="ECO:0007669"/>
    <property type="project" value="TreeGrafter"/>
</dbReference>
<dbReference type="GO" id="GO:0002184">
    <property type="term" value="P:cytoplasmic translational termination"/>
    <property type="evidence" value="ECO:0007669"/>
    <property type="project" value="TreeGrafter"/>
</dbReference>
<dbReference type="CDD" id="cd00520">
    <property type="entry name" value="RRF"/>
    <property type="match status" value="1"/>
</dbReference>
<dbReference type="FunFam" id="1.10.132.20:FF:000001">
    <property type="entry name" value="Ribosome-recycling factor"/>
    <property type="match status" value="1"/>
</dbReference>
<dbReference type="FunFam" id="3.30.1360.40:FF:000001">
    <property type="entry name" value="Ribosome-recycling factor"/>
    <property type="match status" value="1"/>
</dbReference>
<dbReference type="Gene3D" id="3.30.1360.40">
    <property type="match status" value="1"/>
</dbReference>
<dbReference type="Gene3D" id="1.10.132.20">
    <property type="entry name" value="Ribosome-recycling factor"/>
    <property type="match status" value="1"/>
</dbReference>
<dbReference type="HAMAP" id="MF_00040">
    <property type="entry name" value="RRF"/>
    <property type="match status" value="1"/>
</dbReference>
<dbReference type="InterPro" id="IPR002661">
    <property type="entry name" value="Ribosome_recyc_fac"/>
</dbReference>
<dbReference type="InterPro" id="IPR023584">
    <property type="entry name" value="Ribosome_recyc_fac_dom"/>
</dbReference>
<dbReference type="InterPro" id="IPR036191">
    <property type="entry name" value="RRF_sf"/>
</dbReference>
<dbReference type="NCBIfam" id="TIGR00496">
    <property type="entry name" value="frr"/>
    <property type="match status" value="1"/>
</dbReference>
<dbReference type="PANTHER" id="PTHR20982:SF3">
    <property type="entry name" value="MITOCHONDRIAL RIBOSOME RECYCLING FACTOR PSEUDO 1"/>
    <property type="match status" value="1"/>
</dbReference>
<dbReference type="PANTHER" id="PTHR20982">
    <property type="entry name" value="RIBOSOME RECYCLING FACTOR"/>
    <property type="match status" value="1"/>
</dbReference>
<dbReference type="Pfam" id="PF01765">
    <property type="entry name" value="RRF"/>
    <property type="match status" value="1"/>
</dbReference>
<dbReference type="SUPFAM" id="SSF55194">
    <property type="entry name" value="Ribosome recycling factor, RRF"/>
    <property type="match status" value="1"/>
</dbReference>
<keyword id="KW-0963">Cytoplasm</keyword>
<keyword id="KW-0648">Protein biosynthesis</keyword>
<sequence>MINDILKDAENRMKKSLEVLADDLAKIRTGRAHPDLLAHVTIDYYGVETPITQAANITVLDARTLGITPWEKGLSSKIEKAILTSDLGLNPTNLGDSLRVPMPALNEERRKELVKLVKSETEAGRVSIRNIRRDANGDIKELLKEKEITEDQAKKAEDDIQKITDKMIAQADALAAKKEQDLMAV</sequence>
<gene>
    <name evidence="1" type="primary">frr</name>
    <name type="ordered locus">FTN_0230</name>
</gene>
<reference key="1">
    <citation type="journal article" date="2007" name="Genome Biol.">
        <title>Comparison of Francisella tularensis genomes reveals evolutionary events associated with the emergence of human pathogenic strains.</title>
        <authorList>
            <person name="Rohmer L."/>
            <person name="Fong C."/>
            <person name="Abmayr S."/>
            <person name="Wasnick M."/>
            <person name="Larson Freeman T.J."/>
            <person name="Radey M."/>
            <person name="Guina T."/>
            <person name="Svensson K."/>
            <person name="Hayden H.S."/>
            <person name="Jacobs M."/>
            <person name="Gallagher L.A."/>
            <person name="Manoil C."/>
            <person name="Ernst R.K."/>
            <person name="Drees B."/>
            <person name="Buckley D."/>
            <person name="Haugen E."/>
            <person name="Bovee D."/>
            <person name="Zhou Y."/>
            <person name="Chang J."/>
            <person name="Levy R."/>
            <person name="Lim R."/>
            <person name="Gillett W."/>
            <person name="Guenthener D."/>
            <person name="Kang A."/>
            <person name="Shaffer S.A."/>
            <person name="Taylor G."/>
            <person name="Chen J."/>
            <person name="Gallis B."/>
            <person name="D'Argenio D.A."/>
            <person name="Forsman M."/>
            <person name="Olson M.V."/>
            <person name="Goodlett D.R."/>
            <person name="Kaul R."/>
            <person name="Miller S.I."/>
            <person name="Brittnacher M.J."/>
        </authorList>
    </citation>
    <scope>NUCLEOTIDE SEQUENCE [LARGE SCALE GENOMIC DNA]</scope>
    <source>
        <strain>U112</strain>
    </source>
</reference>
<evidence type="ECO:0000255" key="1">
    <source>
        <dbReference type="HAMAP-Rule" id="MF_00040"/>
    </source>
</evidence>
<organism>
    <name type="scientific">Francisella tularensis subsp. novicida (strain U112)</name>
    <dbReference type="NCBI Taxonomy" id="401614"/>
    <lineage>
        <taxon>Bacteria</taxon>
        <taxon>Pseudomonadati</taxon>
        <taxon>Pseudomonadota</taxon>
        <taxon>Gammaproteobacteria</taxon>
        <taxon>Thiotrichales</taxon>
        <taxon>Francisellaceae</taxon>
        <taxon>Francisella</taxon>
    </lineage>
</organism>
<feature type="chain" id="PRO_1000003167" description="Ribosome-recycling factor">
    <location>
        <begin position="1"/>
        <end position="185"/>
    </location>
</feature>
<accession>A0Q4H4</accession>
<comment type="function">
    <text evidence="1">Responsible for the release of ribosomes from messenger RNA at the termination of protein biosynthesis. May increase the efficiency of translation by recycling ribosomes from one round of translation to another.</text>
</comment>
<comment type="subcellular location">
    <subcellularLocation>
        <location evidence="1">Cytoplasm</location>
    </subcellularLocation>
</comment>
<comment type="similarity">
    <text evidence="1">Belongs to the RRF family.</text>
</comment>
<name>RRF_FRATN</name>
<proteinExistence type="inferred from homology"/>
<protein>
    <recommendedName>
        <fullName evidence="1">Ribosome-recycling factor</fullName>
        <shortName evidence="1">RRF</shortName>
    </recommendedName>
    <alternativeName>
        <fullName evidence="1">Ribosome-releasing factor</fullName>
    </alternativeName>
</protein>